<organism>
    <name type="scientific">Mus musculus</name>
    <name type="common">Mouse</name>
    <dbReference type="NCBI Taxonomy" id="10090"/>
    <lineage>
        <taxon>Eukaryota</taxon>
        <taxon>Metazoa</taxon>
        <taxon>Chordata</taxon>
        <taxon>Craniata</taxon>
        <taxon>Vertebrata</taxon>
        <taxon>Euteleostomi</taxon>
        <taxon>Mammalia</taxon>
        <taxon>Eutheria</taxon>
        <taxon>Euarchontoglires</taxon>
        <taxon>Glires</taxon>
        <taxon>Rodentia</taxon>
        <taxon>Myomorpha</taxon>
        <taxon>Muroidea</taxon>
        <taxon>Muridae</taxon>
        <taxon>Murinae</taxon>
        <taxon>Mus</taxon>
        <taxon>Mus</taxon>
    </lineage>
</organism>
<name>HVM41_MOUSE</name>
<dbReference type="EMBL" id="M36631">
    <property type="protein sequence ID" value="AAA38078.1"/>
    <property type="molecule type" value="mRNA"/>
</dbReference>
<dbReference type="PIR" id="A02081">
    <property type="entry name" value="G2MSU1"/>
</dbReference>
<dbReference type="PDB" id="1UZ6">
    <property type="method" value="X-ray"/>
    <property type="resolution" value="2.05 A"/>
    <property type="chains" value="F/H/P/W=1-117"/>
</dbReference>
<dbReference type="PDB" id="1UZ8">
    <property type="method" value="X-ray"/>
    <property type="resolution" value="1.80 A"/>
    <property type="chains" value="B/H=1-117"/>
</dbReference>
<dbReference type="PDBsum" id="1UZ6"/>
<dbReference type="PDBsum" id="1UZ8"/>
<dbReference type="SMR" id="P01811"/>
<dbReference type="FunCoup" id="P01811">
    <property type="interactions" value="408"/>
</dbReference>
<dbReference type="jPOST" id="P01811"/>
<dbReference type="InParanoid" id="P01811"/>
<dbReference type="Proteomes" id="UP000000589">
    <property type="component" value="Unplaced"/>
</dbReference>
<dbReference type="RNAct" id="P01811">
    <property type="molecule type" value="protein"/>
</dbReference>
<dbReference type="GO" id="GO:0005576">
    <property type="term" value="C:extracellular region"/>
    <property type="evidence" value="ECO:0007669"/>
    <property type="project" value="UniProtKB-ARBA"/>
</dbReference>
<dbReference type="GO" id="GO:0019814">
    <property type="term" value="C:immunoglobulin complex"/>
    <property type="evidence" value="ECO:0007669"/>
    <property type="project" value="UniProtKB-KW"/>
</dbReference>
<dbReference type="GO" id="GO:0003823">
    <property type="term" value="F:antigen binding"/>
    <property type="evidence" value="ECO:0000318"/>
    <property type="project" value="GO_Central"/>
</dbReference>
<dbReference type="GO" id="GO:0016064">
    <property type="term" value="P:immunoglobulin mediated immune response"/>
    <property type="evidence" value="ECO:0000318"/>
    <property type="project" value="GO_Central"/>
</dbReference>
<dbReference type="CDD" id="cd04981">
    <property type="entry name" value="IgV_H"/>
    <property type="match status" value="1"/>
</dbReference>
<dbReference type="FunFam" id="2.60.40.10:FF:001259">
    <property type="entry name" value="Immunoglobulin heavy variable 13-2"/>
    <property type="match status" value="1"/>
</dbReference>
<dbReference type="Gene3D" id="2.60.40.10">
    <property type="entry name" value="Immunoglobulins"/>
    <property type="match status" value="1"/>
</dbReference>
<dbReference type="InterPro" id="IPR007110">
    <property type="entry name" value="Ig-like_dom"/>
</dbReference>
<dbReference type="InterPro" id="IPR036179">
    <property type="entry name" value="Ig-like_dom_sf"/>
</dbReference>
<dbReference type="InterPro" id="IPR013783">
    <property type="entry name" value="Ig-like_fold"/>
</dbReference>
<dbReference type="InterPro" id="IPR003599">
    <property type="entry name" value="Ig_sub"/>
</dbReference>
<dbReference type="InterPro" id="IPR013106">
    <property type="entry name" value="Ig_V-set"/>
</dbReference>
<dbReference type="InterPro" id="IPR050199">
    <property type="entry name" value="IgHV"/>
</dbReference>
<dbReference type="PANTHER" id="PTHR23266">
    <property type="entry name" value="IMMUNOGLOBULIN HEAVY CHAIN"/>
    <property type="match status" value="1"/>
</dbReference>
<dbReference type="Pfam" id="PF07686">
    <property type="entry name" value="V-set"/>
    <property type="match status" value="1"/>
</dbReference>
<dbReference type="SMART" id="SM00409">
    <property type="entry name" value="IG"/>
    <property type="match status" value="1"/>
</dbReference>
<dbReference type="SMART" id="SM00406">
    <property type="entry name" value="IGv"/>
    <property type="match status" value="1"/>
</dbReference>
<dbReference type="SUPFAM" id="SSF48726">
    <property type="entry name" value="Immunoglobulin"/>
    <property type="match status" value="1"/>
</dbReference>
<dbReference type="PROSITE" id="PS50835">
    <property type="entry name" value="IG_LIKE"/>
    <property type="match status" value="1"/>
</dbReference>
<keyword id="KW-0002">3D-structure</keyword>
<keyword id="KW-1064">Adaptive immunity</keyword>
<keyword id="KW-0391">Immunity</keyword>
<keyword id="KW-1280">Immunoglobulin</keyword>
<keyword id="KW-1185">Reference proteome</keyword>
<sequence>EVKLLESGGGLVQPGGSLKLSCAASGFDFSGYWMSWVRQAPGKGLEWIGEINPDSSTINYTPFLKDKFIISRDNAKNTLFLQMSKVRSEDTALYFCARNWDVGFDYWGQVTTLTVSS</sequence>
<comment type="miscellaneous">
    <text>This chain was isolated from an Ig gamma-2a myeloma protein binding 2,6-levan.</text>
</comment>
<protein>
    <recommendedName>
        <fullName>Ig heavy chain V region UPC10</fullName>
    </recommendedName>
</protein>
<feature type="chain" id="PRO_0000059894" description="Ig heavy chain V region UPC10">
    <location>
        <begin position="1"/>
        <end position="117" status="greater than"/>
    </location>
</feature>
<feature type="domain" description="Ig-like">
    <location>
        <begin position="1"/>
        <end position="116"/>
    </location>
</feature>
<feature type="non-terminal residue">
    <location>
        <position position="117"/>
    </location>
</feature>
<accession>P01811</accession>
<proteinExistence type="evidence at protein level"/>
<reference key="1">
    <citation type="journal article" date="1981" name="Ann. Immunol. (Paris)">
        <title>Correlation between D region structure and antigen-binding specificity: evidences from the comparison of closely related immunoglobulin VH sequences.</title>
        <authorList>
            <person name="Auffray C."/>
            <person name="Sikorav J.-L."/>
            <person name="Ollo R."/>
            <person name="Rougeon F."/>
        </authorList>
    </citation>
    <scope>NUCLEOTIDE SEQUENCE [MRNA]</scope>
</reference>